<comment type="function">
    <text>Extracellular zinc metalloprotease.</text>
</comment>
<comment type="catalytic activity">
    <reaction>
        <text>Similar, but not identical, to that of thermolysin.</text>
        <dbReference type="EC" id="3.4.24.28"/>
    </reaction>
</comment>
<comment type="cofactor">
    <cofactor evidence="4">
        <name>Ca(2+)</name>
        <dbReference type="ChEBI" id="CHEBI:29108"/>
    </cofactor>
    <text evidence="4">Binds 4 Ca(2+) ions per subunit.</text>
</comment>
<comment type="cofactor">
    <cofactor evidence="4">
        <name>Zn(2+)</name>
        <dbReference type="ChEBI" id="CHEBI:29105"/>
    </cofactor>
    <text evidence="4">Binds 1 zinc ion per subunit.</text>
</comment>
<comment type="biophysicochemical properties">
    <temperatureDependence>
        <text>Thermolabile.</text>
    </temperatureDependence>
</comment>
<comment type="subcellular location">
    <subcellularLocation>
        <location>Secreted</location>
    </subcellularLocation>
</comment>
<comment type="similarity">
    <text evidence="4">Belongs to the peptidase M4 family.</text>
</comment>
<reference key="1">
    <citation type="journal article" date="1991" name="J. Ferment. Bioeng.">
        <title>Nucleotide sequence of the neutral protease gene from Bacillus subtillis var, amylosacchariticus.</title>
        <authorList>
            <person name="Yoshimoto T."/>
            <person name="Oyama H."/>
            <person name="Takeshita T."/>
            <person name="Higashi H."/>
            <person name="Xu S."/>
            <person name="Tsuru D."/>
        </authorList>
    </citation>
    <scope>NUCLEOTIDE SEQUENCE [GENOMIC DNA]</scope>
</reference>
<reference key="2">
    <citation type="journal article" date="1989" name="Agric. Biol. Chem.">
        <title>Complete amino acid sequence of neutral protease from Bacillus subtilis var. amylosacchariticus.</title>
        <authorList>
            <person name="Kobayashi R."/>
            <person name="Yoshimoto T."/>
            <person name="Tsuru D."/>
        </authorList>
    </citation>
    <scope>PROTEIN SEQUENCE OF 222-521</scope>
</reference>
<proteinExistence type="evidence at protein level"/>
<accession>P68735</accession>
<accession>P06142</accession>
<accession>P25268</accession>
<keyword id="KW-0106">Calcium</keyword>
<keyword id="KW-0903">Direct protein sequencing</keyword>
<keyword id="KW-0378">Hydrolase</keyword>
<keyword id="KW-0479">Metal-binding</keyword>
<keyword id="KW-0482">Metalloprotease</keyword>
<keyword id="KW-0645">Protease</keyword>
<keyword id="KW-0964">Secreted</keyword>
<keyword id="KW-0732">Signal</keyword>
<keyword id="KW-0862">Zinc</keyword>
<keyword id="KW-0865">Zymogen</keyword>
<name>NPRE_BACSA</name>
<feature type="signal peptide" evidence="1">
    <location>
        <begin position="1"/>
        <end position="27"/>
    </location>
</feature>
<feature type="propeptide" id="PRO_0000028604" description="Activation peptide" evidence="3">
    <location>
        <begin position="28"/>
        <end position="221"/>
    </location>
</feature>
<feature type="chain" id="PRO_0000028605" description="Bacillolysin">
    <location>
        <begin position="222"/>
        <end position="521"/>
    </location>
</feature>
<feature type="active site" evidence="2">
    <location>
        <position position="365"/>
    </location>
</feature>
<feature type="active site" description="Proton donor" evidence="2">
    <location>
        <position position="449"/>
    </location>
</feature>
<feature type="binding site" evidence="1">
    <location>
        <position position="360"/>
    </location>
    <ligand>
        <name>Ca(2+)</name>
        <dbReference type="ChEBI" id="CHEBI:29108"/>
        <label>1</label>
    </ligand>
</feature>
<feature type="binding site" evidence="2">
    <location>
        <position position="364"/>
    </location>
    <ligand>
        <name>Zn(2+)</name>
        <dbReference type="ChEBI" id="CHEBI:29105"/>
        <note>catalytic</note>
    </ligand>
</feature>
<feature type="binding site" evidence="2">
    <location>
        <position position="368"/>
    </location>
    <ligand>
        <name>Zn(2+)</name>
        <dbReference type="ChEBI" id="CHEBI:29105"/>
        <note>catalytic</note>
    </ligand>
</feature>
<feature type="binding site" evidence="2">
    <location>
        <position position="388"/>
    </location>
    <ligand>
        <name>Zn(2+)</name>
        <dbReference type="ChEBI" id="CHEBI:29105"/>
        <note>catalytic</note>
    </ligand>
</feature>
<feature type="binding site" evidence="1">
    <location>
        <position position="399"/>
    </location>
    <ligand>
        <name>Ca(2+)</name>
        <dbReference type="ChEBI" id="CHEBI:29108"/>
        <label>1</label>
    </ligand>
</feature>
<feature type="binding site" evidence="1">
    <location>
        <position position="399"/>
    </location>
    <ligand>
        <name>Ca(2+)</name>
        <dbReference type="ChEBI" id="CHEBI:29108"/>
        <label>2</label>
    </ligand>
</feature>
<feature type="binding site" evidence="1">
    <location>
        <position position="402"/>
    </location>
    <ligand>
        <name>Ca(2+)</name>
        <dbReference type="ChEBI" id="CHEBI:29108"/>
        <label>1</label>
    </ligand>
</feature>
<feature type="binding site" evidence="1">
    <location>
        <position position="402"/>
    </location>
    <ligand>
        <name>Ca(2+)</name>
        <dbReference type="ChEBI" id="CHEBI:29108"/>
        <label>2</label>
    </ligand>
</feature>
<feature type="binding site" evidence="1">
    <location>
        <position position="404"/>
    </location>
    <ligand>
        <name>Ca(2+)</name>
        <dbReference type="ChEBI" id="CHEBI:29108"/>
        <label>1</label>
    </ligand>
</feature>
<feature type="binding site" evidence="1">
    <location>
        <position position="407"/>
    </location>
    <ligand>
        <name>Ca(2+)</name>
        <dbReference type="ChEBI" id="CHEBI:29108"/>
        <label>1</label>
    </ligand>
</feature>
<feature type="binding site" evidence="1">
    <location>
        <position position="407"/>
    </location>
    <ligand>
        <name>Ca(2+)</name>
        <dbReference type="ChEBI" id="CHEBI:29108"/>
        <label>2</label>
    </ligand>
</feature>
<dbReference type="EC" id="3.4.24.28"/>
<dbReference type="EMBL" id="D10773">
    <property type="protein sequence ID" value="BAA01604.1"/>
    <property type="molecule type" value="Genomic_DNA"/>
</dbReference>
<dbReference type="SMR" id="P68735"/>
<dbReference type="MEROPS" id="M04.014"/>
<dbReference type="GO" id="GO:0005576">
    <property type="term" value="C:extracellular region"/>
    <property type="evidence" value="ECO:0007669"/>
    <property type="project" value="UniProtKB-SubCell"/>
</dbReference>
<dbReference type="GO" id="GO:0046872">
    <property type="term" value="F:metal ion binding"/>
    <property type="evidence" value="ECO:0007669"/>
    <property type="project" value="UniProtKB-KW"/>
</dbReference>
<dbReference type="GO" id="GO:0004222">
    <property type="term" value="F:metalloendopeptidase activity"/>
    <property type="evidence" value="ECO:0007669"/>
    <property type="project" value="InterPro"/>
</dbReference>
<dbReference type="GO" id="GO:0006508">
    <property type="term" value="P:proteolysis"/>
    <property type="evidence" value="ECO:0007669"/>
    <property type="project" value="UniProtKB-KW"/>
</dbReference>
<dbReference type="CDD" id="cd09597">
    <property type="entry name" value="M4_TLP"/>
    <property type="match status" value="1"/>
</dbReference>
<dbReference type="Gene3D" id="3.10.170.10">
    <property type="match status" value="1"/>
</dbReference>
<dbReference type="Gene3D" id="3.10.450.40">
    <property type="match status" value="1"/>
</dbReference>
<dbReference type="Gene3D" id="3.10.450.490">
    <property type="match status" value="1"/>
</dbReference>
<dbReference type="Gene3D" id="1.10.390.10">
    <property type="entry name" value="Neutral Protease Domain 2"/>
    <property type="match status" value="1"/>
</dbReference>
<dbReference type="InterPro" id="IPR011096">
    <property type="entry name" value="FTP_domain"/>
</dbReference>
<dbReference type="InterPro" id="IPR025711">
    <property type="entry name" value="PepSY"/>
</dbReference>
<dbReference type="InterPro" id="IPR023612">
    <property type="entry name" value="Peptidase_M4"/>
</dbReference>
<dbReference type="InterPro" id="IPR027268">
    <property type="entry name" value="Peptidase_M4/M1_CTD_sf"/>
</dbReference>
<dbReference type="InterPro" id="IPR001570">
    <property type="entry name" value="Peptidase_M4_C_domain"/>
</dbReference>
<dbReference type="InterPro" id="IPR013856">
    <property type="entry name" value="Peptidase_M4_domain"/>
</dbReference>
<dbReference type="InterPro" id="IPR050728">
    <property type="entry name" value="Zinc_Metalloprotease_M4"/>
</dbReference>
<dbReference type="PANTHER" id="PTHR33794">
    <property type="entry name" value="BACILLOLYSIN"/>
    <property type="match status" value="1"/>
</dbReference>
<dbReference type="PANTHER" id="PTHR33794:SF1">
    <property type="entry name" value="BACILLOLYSIN"/>
    <property type="match status" value="1"/>
</dbReference>
<dbReference type="Pfam" id="PF07504">
    <property type="entry name" value="FTP"/>
    <property type="match status" value="1"/>
</dbReference>
<dbReference type="Pfam" id="PF03413">
    <property type="entry name" value="PepSY"/>
    <property type="match status" value="1"/>
</dbReference>
<dbReference type="Pfam" id="PF01447">
    <property type="entry name" value="Peptidase_M4"/>
    <property type="match status" value="1"/>
</dbReference>
<dbReference type="Pfam" id="PF02868">
    <property type="entry name" value="Peptidase_M4_C"/>
    <property type="match status" value="1"/>
</dbReference>
<dbReference type="PRINTS" id="PR00730">
    <property type="entry name" value="THERMOLYSIN"/>
</dbReference>
<dbReference type="SUPFAM" id="SSF55486">
    <property type="entry name" value="Metalloproteases ('zincins'), catalytic domain"/>
    <property type="match status" value="1"/>
</dbReference>
<dbReference type="PROSITE" id="PS00142">
    <property type="entry name" value="ZINC_PROTEASE"/>
    <property type="match status" value="1"/>
</dbReference>
<evidence type="ECO:0000255" key="1"/>
<evidence type="ECO:0000255" key="2">
    <source>
        <dbReference type="PROSITE-ProRule" id="PRU10095"/>
    </source>
</evidence>
<evidence type="ECO:0000269" key="3">
    <source ref="2"/>
</evidence>
<evidence type="ECO:0000305" key="4"/>
<organism>
    <name type="scientific">Bacillus subtilis subsp. amylosacchariticus</name>
    <dbReference type="NCBI Taxonomy" id="1483"/>
    <lineage>
        <taxon>Bacteria</taxon>
        <taxon>Bacillati</taxon>
        <taxon>Bacillota</taxon>
        <taxon>Bacilli</taxon>
        <taxon>Bacillales</taxon>
        <taxon>Bacillaceae</taxon>
        <taxon>Bacillus</taxon>
    </lineage>
</organism>
<sequence length="521" mass="56522">MGLGKKLSVAVAASFMSLSISLPGVQAAEGHQLKENQTNFLSKNAIAQSELSAPNDKAVKQFLKKNSNIFKGDPSKRLKLVESTTDALGYKHFRYAPVVNGVPIKDSQVIVHVDKSDNVYAVNGELHNQSAAKTDNSQKVSSEKALALAFKAIGKSPDAVSNGAAKNSNKAELKAIETKDGSYRLAYDVTIRYVEPEPANWEVLVDAETGSILKQQNKVEHAAATGSGTTLKGATVPLNISYEGGKYVLRDLSKPTGTQIITYDLQNRQSRLPGTLVSSTTKTFTSSSQRAAVDAHYNLGKVYDYFYSNFKRNSYDNKGSKIVSSVHYGTQYNNAAWTGDQMIYGDGDGSFFSPLSGSLDVTAHEMTHGVTQETANLIYENQPGALNESFSDVFGYFNDTEDWDIGEDITVSQPALRSLSNPTKYNQPDNYANYRNLPNTDEGDYGGVHTNSGIPNKAAYNTITKLGVSKSQQIYYRALTTYLTPSSTFKDAKAALIQSARDLYGSTDAAKVEAAWNAVGL</sequence>
<gene>
    <name type="primary">nprE</name>
</gene>
<protein>
    <recommendedName>
        <fullName>Bacillolysin</fullName>
        <ecNumber>3.4.24.28</ecNumber>
    </recommendedName>
    <alternativeName>
        <fullName>MCP 76</fullName>
    </alternativeName>
    <alternativeName>
        <fullName>Neutral protease</fullName>
    </alternativeName>
</protein>